<sequence length="193" mass="21464">MLLSDRDILAAQSAGHISLDPWTPEMVQPASIDVRLDRYFRLFNNHAYTYVDPAENQGALTEQFEVAPDEPWILHPGEFALGSTWEYVKLDPSIAARLEGKSSLGRLGILTHSTAGFIDPGFEGHITLELSNVSTLPVKLWPGMKIGQMCFFQLSSPAEHPYGSKGTGSHYQGQRGPTPSRSYENFYRAHIDD</sequence>
<evidence type="ECO:0000255" key="1">
    <source>
        <dbReference type="HAMAP-Rule" id="MF_00146"/>
    </source>
</evidence>
<evidence type="ECO:0000256" key="2">
    <source>
        <dbReference type="SAM" id="MobiDB-lite"/>
    </source>
</evidence>
<reference key="1">
    <citation type="journal article" date="2008" name="BMC Genomics">
        <title>Comparative genomic analysis of the gut bacterium Bifidobacterium longum reveals loci susceptible to deletion during pure culture growth.</title>
        <authorList>
            <person name="Lee J.H."/>
            <person name="Karamychev V.N."/>
            <person name="Kozyavkin S.A."/>
            <person name="Mills D."/>
            <person name="Pavlov A.R."/>
            <person name="Pavlova N.V."/>
            <person name="Polouchine N.N."/>
            <person name="Richardson P.M."/>
            <person name="Shakhova V.V."/>
            <person name="Slesarev A.I."/>
            <person name="Weimer B."/>
            <person name="O'Sullivan D.J."/>
        </authorList>
    </citation>
    <scope>NUCLEOTIDE SEQUENCE [LARGE SCALE GENOMIC DNA]</scope>
    <source>
        <strain>DJO10A</strain>
    </source>
</reference>
<accession>B3DP64</accession>
<dbReference type="EC" id="3.5.4.30" evidence="1"/>
<dbReference type="EMBL" id="CP000605">
    <property type="protein sequence ID" value="ACD98923.1"/>
    <property type="molecule type" value="Genomic_DNA"/>
</dbReference>
<dbReference type="RefSeq" id="WP_007051821.1">
    <property type="nucleotide sequence ID" value="NZ_AABM02000008.1"/>
</dbReference>
<dbReference type="SMR" id="B3DP64"/>
<dbReference type="GeneID" id="69579108"/>
<dbReference type="KEGG" id="blj:BLD_1478"/>
<dbReference type="HOGENOM" id="CLU_087476_2_0_11"/>
<dbReference type="UniPathway" id="UPA00610">
    <property type="reaction ID" value="UER00667"/>
</dbReference>
<dbReference type="Proteomes" id="UP000002419">
    <property type="component" value="Chromosome"/>
</dbReference>
<dbReference type="GO" id="GO:0033973">
    <property type="term" value="F:dCTP deaminase (dUMP-forming) activity"/>
    <property type="evidence" value="ECO:0007669"/>
    <property type="project" value="UniProtKB-UniRule"/>
</dbReference>
<dbReference type="GO" id="GO:0008829">
    <property type="term" value="F:dCTP deaminase activity"/>
    <property type="evidence" value="ECO:0007669"/>
    <property type="project" value="InterPro"/>
</dbReference>
<dbReference type="GO" id="GO:0000166">
    <property type="term" value="F:nucleotide binding"/>
    <property type="evidence" value="ECO:0007669"/>
    <property type="project" value="UniProtKB-KW"/>
</dbReference>
<dbReference type="GO" id="GO:0006226">
    <property type="term" value="P:dUMP biosynthetic process"/>
    <property type="evidence" value="ECO:0007669"/>
    <property type="project" value="UniProtKB-UniRule"/>
</dbReference>
<dbReference type="GO" id="GO:0006229">
    <property type="term" value="P:dUTP biosynthetic process"/>
    <property type="evidence" value="ECO:0007669"/>
    <property type="project" value="InterPro"/>
</dbReference>
<dbReference type="GO" id="GO:0015949">
    <property type="term" value="P:nucleobase-containing small molecule interconversion"/>
    <property type="evidence" value="ECO:0007669"/>
    <property type="project" value="TreeGrafter"/>
</dbReference>
<dbReference type="CDD" id="cd07557">
    <property type="entry name" value="trimeric_dUTPase"/>
    <property type="match status" value="1"/>
</dbReference>
<dbReference type="FunFam" id="2.70.40.10:FF:000005">
    <property type="entry name" value="dCTP deaminase, dUMP-forming"/>
    <property type="match status" value="1"/>
</dbReference>
<dbReference type="Gene3D" id="2.70.40.10">
    <property type="match status" value="1"/>
</dbReference>
<dbReference type="HAMAP" id="MF_00146">
    <property type="entry name" value="dCTP_deaminase"/>
    <property type="match status" value="1"/>
</dbReference>
<dbReference type="InterPro" id="IPR011962">
    <property type="entry name" value="dCTP_deaminase"/>
</dbReference>
<dbReference type="InterPro" id="IPR036157">
    <property type="entry name" value="dUTPase-like_sf"/>
</dbReference>
<dbReference type="InterPro" id="IPR033704">
    <property type="entry name" value="dUTPase_trimeric"/>
</dbReference>
<dbReference type="NCBIfam" id="TIGR02274">
    <property type="entry name" value="dCTP_deam"/>
    <property type="match status" value="1"/>
</dbReference>
<dbReference type="PANTHER" id="PTHR42680">
    <property type="entry name" value="DCTP DEAMINASE"/>
    <property type="match status" value="1"/>
</dbReference>
<dbReference type="PANTHER" id="PTHR42680:SF3">
    <property type="entry name" value="DCTP DEAMINASE"/>
    <property type="match status" value="1"/>
</dbReference>
<dbReference type="Pfam" id="PF22769">
    <property type="entry name" value="DCD"/>
    <property type="match status" value="1"/>
</dbReference>
<dbReference type="SUPFAM" id="SSF51283">
    <property type="entry name" value="dUTPase-like"/>
    <property type="match status" value="1"/>
</dbReference>
<proteinExistence type="inferred from homology"/>
<keyword id="KW-0378">Hydrolase</keyword>
<keyword id="KW-0546">Nucleotide metabolism</keyword>
<keyword id="KW-0547">Nucleotide-binding</keyword>
<gene>
    <name evidence="1" type="primary">dcd</name>
    <name type="ordered locus">BLD_1478</name>
</gene>
<feature type="chain" id="PRO_1000096406" description="dCTP deaminase, dUMP-forming">
    <location>
        <begin position="1"/>
        <end position="193"/>
    </location>
</feature>
<feature type="region of interest" description="Disordered" evidence="2">
    <location>
        <begin position="162"/>
        <end position="184"/>
    </location>
</feature>
<feature type="compositionally biased region" description="Polar residues" evidence="2">
    <location>
        <begin position="167"/>
        <end position="183"/>
    </location>
</feature>
<feature type="active site" description="Proton donor/acceptor" evidence="1">
    <location>
        <position position="129"/>
    </location>
</feature>
<feature type="binding site" evidence="1">
    <location>
        <begin position="101"/>
        <end position="106"/>
    </location>
    <ligand>
        <name>dCTP</name>
        <dbReference type="ChEBI" id="CHEBI:61481"/>
    </ligand>
</feature>
<feature type="binding site" evidence="1">
    <location>
        <position position="119"/>
    </location>
    <ligand>
        <name>dCTP</name>
        <dbReference type="ChEBI" id="CHEBI:61481"/>
    </ligand>
</feature>
<feature type="binding site" evidence="1">
    <location>
        <begin position="127"/>
        <end position="129"/>
    </location>
    <ligand>
        <name>dCTP</name>
        <dbReference type="ChEBI" id="CHEBI:61481"/>
    </ligand>
</feature>
<feature type="binding site" evidence="1">
    <location>
        <position position="148"/>
    </location>
    <ligand>
        <name>dCTP</name>
        <dbReference type="ChEBI" id="CHEBI:61481"/>
    </ligand>
</feature>
<feature type="binding site" evidence="1">
    <location>
        <position position="162"/>
    </location>
    <ligand>
        <name>dCTP</name>
        <dbReference type="ChEBI" id="CHEBI:61481"/>
    </ligand>
</feature>
<feature type="binding site" evidence="1">
    <location>
        <position position="174"/>
    </location>
    <ligand>
        <name>dCTP</name>
        <dbReference type="ChEBI" id="CHEBI:61481"/>
    </ligand>
</feature>
<feature type="site" description="Important for bifunctional activity" evidence="1">
    <location>
        <begin position="116"/>
        <end position="117"/>
    </location>
</feature>
<protein>
    <recommendedName>
        <fullName evidence="1">dCTP deaminase, dUMP-forming</fullName>
        <ecNumber evidence="1">3.5.4.30</ecNumber>
    </recommendedName>
    <alternativeName>
        <fullName evidence="1">Bifunctional dCTP deaminase:dUTPase</fullName>
    </alternativeName>
    <alternativeName>
        <fullName evidence="1">DCD-DUT</fullName>
    </alternativeName>
</protein>
<comment type="function">
    <text evidence="1">Bifunctional enzyme that catalyzes both the deamination of dCTP to dUTP and the hydrolysis of dUTP to dUMP without releasing the toxic dUTP intermediate.</text>
</comment>
<comment type="catalytic activity">
    <reaction evidence="1">
        <text>dCTP + 2 H2O = dUMP + NH4(+) + diphosphate</text>
        <dbReference type="Rhea" id="RHEA:19205"/>
        <dbReference type="ChEBI" id="CHEBI:15377"/>
        <dbReference type="ChEBI" id="CHEBI:28938"/>
        <dbReference type="ChEBI" id="CHEBI:33019"/>
        <dbReference type="ChEBI" id="CHEBI:61481"/>
        <dbReference type="ChEBI" id="CHEBI:246422"/>
        <dbReference type="EC" id="3.5.4.30"/>
    </reaction>
</comment>
<comment type="pathway">
    <text evidence="1">Pyrimidine metabolism; dUMP biosynthesis; dUMP from dCTP: step 1/1.</text>
</comment>
<comment type="subunit">
    <text evidence="1">Homotrimer.</text>
</comment>
<comment type="similarity">
    <text evidence="1">Belongs to the dCTP deaminase family.</text>
</comment>
<name>DCDB_BIFLD</name>
<organism>
    <name type="scientific">Bifidobacterium longum (strain DJO10A)</name>
    <dbReference type="NCBI Taxonomy" id="205913"/>
    <lineage>
        <taxon>Bacteria</taxon>
        <taxon>Bacillati</taxon>
        <taxon>Actinomycetota</taxon>
        <taxon>Actinomycetes</taxon>
        <taxon>Bifidobacteriales</taxon>
        <taxon>Bifidobacteriaceae</taxon>
        <taxon>Bifidobacterium</taxon>
    </lineage>
</organism>